<evidence type="ECO:0000250" key="1"/>
<evidence type="ECO:0000255" key="2">
    <source>
        <dbReference type="HAMAP-Rule" id="MF_01303"/>
    </source>
</evidence>
<comment type="function">
    <text evidence="2">Apoprotein for the two 4Fe-4S centers FA and FB of photosystem I (PSI); essential for photochemical activity. FB is the terminal electron acceptor of PSI, donating electrons to ferredoxin. The C-terminus interacts with PsaA/B/D and helps assemble the protein into the PSI complex. Required for binding of PsaD and PsaE to PSI. PSI is a plastocyanin/cytochrome c6-ferredoxin oxidoreductase, converting photonic excitation into a charge separation, which transfers an electron from the donor P700 chlorophyll pair to the spectroscopically characterized acceptors A0, A1, FX, FA and FB in turn.</text>
</comment>
<comment type="catalytic activity">
    <reaction evidence="2">
        <text>reduced [plastocyanin] + hnu + oxidized [2Fe-2S]-[ferredoxin] = oxidized [plastocyanin] + reduced [2Fe-2S]-[ferredoxin]</text>
        <dbReference type="Rhea" id="RHEA:30407"/>
        <dbReference type="Rhea" id="RHEA-COMP:10000"/>
        <dbReference type="Rhea" id="RHEA-COMP:10001"/>
        <dbReference type="Rhea" id="RHEA-COMP:10039"/>
        <dbReference type="Rhea" id="RHEA-COMP:10040"/>
        <dbReference type="ChEBI" id="CHEBI:29036"/>
        <dbReference type="ChEBI" id="CHEBI:30212"/>
        <dbReference type="ChEBI" id="CHEBI:33737"/>
        <dbReference type="ChEBI" id="CHEBI:33738"/>
        <dbReference type="ChEBI" id="CHEBI:49552"/>
        <dbReference type="EC" id="1.97.1.12"/>
    </reaction>
</comment>
<comment type="cofactor">
    <cofactor evidence="2">
        <name>[4Fe-4S] cluster</name>
        <dbReference type="ChEBI" id="CHEBI:49883"/>
    </cofactor>
    <text evidence="2">Binds 2 [4Fe-4S] clusters. Cluster 2 is most probably the spectroscopically characterized electron acceptor FA and cluster 1 is most probably FB.</text>
</comment>
<comment type="subunit">
    <text evidence="2">The cyanobacterial PSI reaction center is composed of one copy each of PsaA,B,C,D,E,F,I,J,K,L,M and X, and forms trimeric complexes.</text>
</comment>
<comment type="subcellular location">
    <subcellularLocation>
        <location evidence="2">Cellular thylakoid membrane</location>
        <topology evidence="2">Peripheral membrane protein</topology>
        <orientation evidence="2">Cytoplasmic side</orientation>
    </subcellularLocation>
</comment>
<dbReference type="EC" id="1.97.1.12" evidence="2"/>
<dbReference type="EMBL" id="CP000551">
    <property type="protein sequence ID" value="ABM71100.1"/>
    <property type="molecule type" value="Genomic_DNA"/>
</dbReference>
<dbReference type="RefSeq" id="WP_007099573.1">
    <property type="nucleotide sequence ID" value="NC_008816.1"/>
</dbReference>
<dbReference type="SMR" id="A2BTI9"/>
<dbReference type="STRING" id="146891.A9601_18171"/>
<dbReference type="GeneID" id="60200697"/>
<dbReference type="KEGG" id="pmb:A9601_18171"/>
<dbReference type="eggNOG" id="COG1143">
    <property type="taxonomic scope" value="Bacteria"/>
</dbReference>
<dbReference type="HOGENOM" id="CLU_139698_8_0_3"/>
<dbReference type="OrthoDB" id="9804603at2"/>
<dbReference type="Proteomes" id="UP000002590">
    <property type="component" value="Chromosome"/>
</dbReference>
<dbReference type="GO" id="GO:0009522">
    <property type="term" value="C:photosystem I"/>
    <property type="evidence" value="ECO:0007669"/>
    <property type="project" value="UniProtKB-KW"/>
</dbReference>
<dbReference type="GO" id="GO:0031676">
    <property type="term" value="C:plasma membrane-derived thylakoid membrane"/>
    <property type="evidence" value="ECO:0007669"/>
    <property type="project" value="UniProtKB-SubCell"/>
</dbReference>
<dbReference type="GO" id="GO:0051539">
    <property type="term" value="F:4 iron, 4 sulfur cluster binding"/>
    <property type="evidence" value="ECO:0007669"/>
    <property type="project" value="UniProtKB-KW"/>
</dbReference>
<dbReference type="GO" id="GO:0009055">
    <property type="term" value="F:electron transfer activity"/>
    <property type="evidence" value="ECO:0007669"/>
    <property type="project" value="UniProtKB-UniRule"/>
</dbReference>
<dbReference type="GO" id="GO:0046872">
    <property type="term" value="F:metal ion binding"/>
    <property type="evidence" value="ECO:0007669"/>
    <property type="project" value="UniProtKB-KW"/>
</dbReference>
<dbReference type="GO" id="GO:0016491">
    <property type="term" value="F:oxidoreductase activity"/>
    <property type="evidence" value="ECO:0007669"/>
    <property type="project" value="UniProtKB-KW"/>
</dbReference>
<dbReference type="GO" id="GO:0009773">
    <property type="term" value="P:photosynthetic electron transport in photosystem I"/>
    <property type="evidence" value="ECO:0007669"/>
    <property type="project" value="InterPro"/>
</dbReference>
<dbReference type="FunFam" id="3.30.70.20:FF:000001">
    <property type="entry name" value="Photosystem I iron-sulfur center"/>
    <property type="match status" value="1"/>
</dbReference>
<dbReference type="Gene3D" id="3.30.70.20">
    <property type="match status" value="1"/>
</dbReference>
<dbReference type="HAMAP" id="MF_01303">
    <property type="entry name" value="PSI_PsaC"/>
    <property type="match status" value="1"/>
</dbReference>
<dbReference type="InterPro" id="IPR017896">
    <property type="entry name" value="4Fe4S_Fe-S-bd"/>
</dbReference>
<dbReference type="InterPro" id="IPR017900">
    <property type="entry name" value="4Fe4S_Fe_S_CS"/>
</dbReference>
<dbReference type="InterPro" id="IPR050157">
    <property type="entry name" value="PSI_iron-sulfur_center"/>
</dbReference>
<dbReference type="InterPro" id="IPR017491">
    <property type="entry name" value="PSI_PsaC"/>
</dbReference>
<dbReference type="NCBIfam" id="TIGR03048">
    <property type="entry name" value="PS_I_psaC"/>
    <property type="match status" value="1"/>
</dbReference>
<dbReference type="PANTHER" id="PTHR24960:SF79">
    <property type="entry name" value="PHOTOSYSTEM I IRON-SULFUR CENTER"/>
    <property type="match status" value="1"/>
</dbReference>
<dbReference type="PANTHER" id="PTHR24960">
    <property type="entry name" value="PHOTOSYSTEM I IRON-SULFUR CENTER-RELATED"/>
    <property type="match status" value="1"/>
</dbReference>
<dbReference type="Pfam" id="PF12838">
    <property type="entry name" value="Fer4_7"/>
    <property type="match status" value="1"/>
</dbReference>
<dbReference type="SUPFAM" id="SSF54862">
    <property type="entry name" value="4Fe-4S ferredoxins"/>
    <property type="match status" value="1"/>
</dbReference>
<dbReference type="PROSITE" id="PS00198">
    <property type="entry name" value="4FE4S_FER_1"/>
    <property type="match status" value="2"/>
</dbReference>
<dbReference type="PROSITE" id="PS51379">
    <property type="entry name" value="4FE4S_FER_2"/>
    <property type="match status" value="2"/>
</dbReference>
<gene>
    <name evidence="2" type="primary">psaC</name>
    <name type="ordered locus">A9601_18171</name>
</gene>
<organism>
    <name type="scientific">Prochlorococcus marinus (strain AS9601)</name>
    <dbReference type="NCBI Taxonomy" id="146891"/>
    <lineage>
        <taxon>Bacteria</taxon>
        <taxon>Bacillati</taxon>
        <taxon>Cyanobacteriota</taxon>
        <taxon>Cyanophyceae</taxon>
        <taxon>Synechococcales</taxon>
        <taxon>Prochlorococcaceae</taxon>
        <taxon>Prochlorococcus</taxon>
    </lineage>
</organism>
<sequence>MSHAVKIYDTCIGCTQCVRACPLDVLEMVPWDGCKAGQIASSPRTEDCVGCKRCETACPTDFLSIRVYLGDETSRSMGLAY</sequence>
<keyword id="KW-0004">4Fe-4S</keyword>
<keyword id="KW-0249">Electron transport</keyword>
<keyword id="KW-0408">Iron</keyword>
<keyword id="KW-0411">Iron-sulfur</keyword>
<keyword id="KW-0472">Membrane</keyword>
<keyword id="KW-0479">Metal-binding</keyword>
<keyword id="KW-0560">Oxidoreductase</keyword>
<keyword id="KW-0602">Photosynthesis</keyword>
<keyword id="KW-0603">Photosystem I</keyword>
<keyword id="KW-0677">Repeat</keyword>
<keyword id="KW-0793">Thylakoid</keyword>
<keyword id="KW-0813">Transport</keyword>
<proteinExistence type="inferred from homology"/>
<protein>
    <recommendedName>
        <fullName evidence="2">Photosystem I iron-sulfur center</fullName>
        <ecNumber evidence="2">1.97.1.12</ecNumber>
    </recommendedName>
    <alternativeName>
        <fullName evidence="2">9 kDa polypeptide</fullName>
    </alternativeName>
    <alternativeName>
        <fullName evidence="2">PSI-C</fullName>
    </alternativeName>
    <alternativeName>
        <fullName evidence="2">Photosystem I subunit VII</fullName>
    </alternativeName>
    <alternativeName>
        <fullName evidence="2">PsaC</fullName>
    </alternativeName>
</protein>
<name>PSAC_PROMS</name>
<feature type="initiator methionine" description="Removed" evidence="1">
    <location>
        <position position="1"/>
    </location>
</feature>
<feature type="chain" id="PRO_0000292097" description="Photosystem I iron-sulfur center">
    <location>
        <begin position="2"/>
        <end position="81"/>
    </location>
</feature>
<feature type="domain" description="4Fe-4S ferredoxin-type 1" evidence="2">
    <location>
        <begin position="2"/>
        <end position="31"/>
    </location>
</feature>
<feature type="domain" description="4Fe-4S ferredoxin-type 2" evidence="2">
    <location>
        <begin position="37"/>
        <end position="68"/>
    </location>
</feature>
<feature type="binding site" evidence="2">
    <location>
        <position position="11"/>
    </location>
    <ligand>
        <name>[4Fe-4S] cluster</name>
        <dbReference type="ChEBI" id="CHEBI:49883"/>
        <label>1</label>
    </ligand>
</feature>
<feature type="binding site" evidence="2">
    <location>
        <position position="14"/>
    </location>
    <ligand>
        <name>[4Fe-4S] cluster</name>
        <dbReference type="ChEBI" id="CHEBI:49883"/>
        <label>1</label>
    </ligand>
</feature>
<feature type="binding site" evidence="2">
    <location>
        <position position="17"/>
    </location>
    <ligand>
        <name>[4Fe-4S] cluster</name>
        <dbReference type="ChEBI" id="CHEBI:49883"/>
        <label>1</label>
    </ligand>
</feature>
<feature type="binding site" evidence="2">
    <location>
        <position position="21"/>
    </location>
    <ligand>
        <name>[4Fe-4S] cluster</name>
        <dbReference type="ChEBI" id="CHEBI:49883"/>
        <label>2</label>
    </ligand>
</feature>
<feature type="binding site" evidence="2">
    <location>
        <position position="48"/>
    </location>
    <ligand>
        <name>[4Fe-4S] cluster</name>
        <dbReference type="ChEBI" id="CHEBI:49883"/>
        <label>2</label>
    </ligand>
</feature>
<feature type="binding site" evidence="2">
    <location>
        <position position="51"/>
    </location>
    <ligand>
        <name>[4Fe-4S] cluster</name>
        <dbReference type="ChEBI" id="CHEBI:49883"/>
        <label>2</label>
    </ligand>
</feature>
<feature type="binding site" evidence="2">
    <location>
        <position position="54"/>
    </location>
    <ligand>
        <name>[4Fe-4S] cluster</name>
        <dbReference type="ChEBI" id="CHEBI:49883"/>
        <label>2</label>
    </ligand>
</feature>
<feature type="binding site" evidence="2">
    <location>
        <position position="58"/>
    </location>
    <ligand>
        <name>[4Fe-4S] cluster</name>
        <dbReference type="ChEBI" id="CHEBI:49883"/>
        <label>1</label>
    </ligand>
</feature>
<accession>A2BTI9</accession>
<reference key="1">
    <citation type="journal article" date="2007" name="PLoS Genet.">
        <title>Patterns and implications of gene gain and loss in the evolution of Prochlorococcus.</title>
        <authorList>
            <person name="Kettler G.C."/>
            <person name="Martiny A.C."/>
            <person name="Huang K."/>
            <person name="Zucker J."/>
            <person name="Coleman M.L."/>
            <person name="Rodrigue S."/>
            <person name="Chen F."/>
            <person name="Lapidus A."/>
            <person name="Ferriera S."/>
            <person name="Johnson J."/>
            <person name="Steglich C."/>
            <person name="Church G.M."/>
            <person name="Richardson P."/>
            <person name="Chisholm S.W."/>
        </authorList>
    </citation>
    <scope>NUCLEOTIDE SEQUENCE [LARGE SCALE GENOMIC DNA]</scope>
    <source>
        <strain>AS9601</strain>
    </source>
</reference>